<reference key="1">
    <citation type="journal article" date="1995" name="Proc. Natl. Acad. Sci. U.S.A.">
        <title>Seed and vascular expression of a high-affinity transporter for cationic amino acids in Arabidopsis.</title>
        <authorList>
            <person name="Frommer W.B."/>
            <person name="Hummel S."/>
            <person name="Unseld M."/>
            <person name="Ninnemann O."/>
        </authorList>
    </citation>
    <scope>NUCLEOTIDE SEQUENCE [MRNA]</scope>
    <source>
        <strain>cv. Landsberg erecta</strain>
    </source>
</reference>
<reference key="2">
    <citation type="journal article" date="2000" name="Nature">
        <title>Sequence and analysis of chromosome 5 of the plant Arabidopsis thaliana.</title>
        <authorList>
            <person name="Tabata S."/>
            <person name="Kaneko T."/>
            <person name="Nakamura Y."/>
            <person name="Kotani H."/>
            <person name="Kato T."/>
            <person name="Asamizu E."/>
            <person name="Miyajima N."/>
            <person name="Sasamoto S."/>
            <person name="Kimura T."/>
            <person name="Hosouchi T."/>
            <person name="Kawashima K."/>
            <person name="Kohara M."/>
            <person name="Matsumoto M."/>
            <person name="Matsuno A."/>
            <person name="Muraki A."/>
            <person name="Nakayama S."/>
            <person name="Nakazaki N."/>
            <person name="Naruo K."/>
            <person name="Okumura S."/>
            <person name="Shinpo S."/>
            <person name="Takeuchi C."/>
            <person name="Wada T."/>
            <person name="Watanabe A."/>
            <person name="Yamada M."/>
            <person name="Yasuda M."/>
            <person name="Sato S."/>
            <person name="de la Bastide M."/>
            <person name="Huang E."/>
            <person name="Spiegel L."/>
            <person name="Gnoj L."/>
            <person name="O'Shaughnessy A."/>
            <person name="Preston R."/>
            <person name="Habermann K."/>
            <person name="Murray J."/>
            <person name="Johnson D."/>
            <person name="Rohlfing T."/>
            <person name="Nelson J."/>
            <person name="Stoneking T."/>
            <person name="Pepin K."/>
            <person name="Spieth J."/>
            <person name="Sekhon M."/>
            <person name="Armstrong J."/>
            <person name="Becker M."/>
            <person name="Belter E."/>
            <person name="Cordum H."/>
            <person name="Cordes M."/>
            <person name="Courtney L."/>
            <person name="Courtney W."/>
            <person name="Dante M."/>
            <person name="Du H."/>
            <person name="Edwards J."/>
            <person name="Fryman J."/>
            <person name="Haakensen B."/>
            <person name="Lamar E."/>
            <person name="Latreille P."/>
            <person name="Leonard S."/>
            <person name="Meyer R."/>
            <person name="Mulvaney E."/>
            <person name="Ozersky P."/>
            <person name="Riley A."/>
            <person name="Strowmatt C."/>
            <person name="Wagner-McPherson C."/>
            <person name="Wollam A."/>
            <person name="Yoakum M."/>
            <person name="Bell M."/>
            <person name="Dedhia N."/>
            <person name="Parnell L."/>
            <person name="Shah R."/>
            <person name="Rodriguez M."/>
            <person name="Hoon See L."/>
            <person name="Vil D."/>
            <person name="Baker J."/>
            <person name="Kirchoff K."/>
            <person name="Toth K."/>
            <person name="King L."/>
            <person name="Bahret A."/>
            <person name="Miller B."/>
            <person name="Marra M.A."/>
            <person name="Martienssen R."/>
            <person name="McCombie W.R."/>
            <person name="Wilson R.K."/>
            <person name="Murphy G."/>
            <person name="Bancroft I."/>
            <person name="Volckaert G."/>
            <person name="Wambutt R."/>
            <person name="Duesterhoeft A."/>
            <person name="Stiekema W."/>
            <person name="Pohl T."/>
            <person name="Entian K.-D."/>
            <person name="Terryn N."/>
            <person name="Hartley N."/>
            <person name="Bent E."/>
            <person name="Johnson S."/>
            <person name="Langham S.-A."/>
            <person name="McCullagh B."/>
            <person name="Robben J."/>
            <person name="Grymonprez B."/>
            <person name="Zimmermann W."/>
            <person name="Ramsperger U."/>
            <person name="Wedler H."/>
            <person name="Balke K."/>
            <person name="Wedler E."/>
            <person name="Peters S."/>
            <person name="van Staveren M."/>
            <person name="Dirkse W."/>
            <person name="Mooijman P."/>
            <person name="Klein Lankhorst R."/>
            <person name="Weitzenegger T."/>
            <person name="Bothe G."/>
            <person name="Rose M."/>
            <person name="Hauf J."/>
            <person name="Berneiser S."/>
            <person name="Hempel S."/>
            <person name="Feldpausch M."/>
            <person name="Lamberth S."/>
            <person name="Villarroel R."/>
            <person name="Gielen J."/>
            <person name="Ardiles W."/>
            <person name="Bents O."/>
            <person name="Lemcke K."/>
            <person name="Kolesov G."/>
            <person name="Mayer K.F.X."/>
            <person name="Rudd S."/>
            <person name="Schoof H."/>
            <person name="Schueller C."/>
            <person name="Zaccaria P."/>
            <person name="Mewes H.-W."/>
            <person name="Bevan M."/>
            <person name="Fransz P.F."/>
        </authorList>
    </citation>
    <scope>NUCLEOTIDE SEQUENCE [LARGE SCALE GENOMIC DNA]</scope>
    <source>
        <strain>cv. Columbia</strain>
    </source>
</reference>
<reference key="3">
    <citation type="journal article" date="2017" name="Plant J.">
        <title>Araport11: a complete reannotation of the Arabidopsis thaliana reference genome.</title>
        <authorList>
            <person name="Cheng C.Y."/>
            <person name="Krishnakumar V."/>
            <person name="Chan A.P."/>
            <person name="Thibaud-Nissen F."/>
            <person name="Schobel S."/>
            <person name="Town C.D."/>
        </authorList>
    </citation>
    <scope>GENOME REANNOTATION</scope>
    <source>
        <strain>cv. Columbia</strain>
    </source>
</reference>
<reference key="4">
    <citation type="journal article" date="2003" name="Science">
        <title>Empirical analysis of transcriptional activity in the Arabidopsis genome.</title>
        <authorList>
            <person name="Yamada K."/>
            <person name="Lim J."/>
            <person name="Dale J.M."/>
            <person name="Chen H."/>
            <person name="Shinn P."/>
            <person name="Palm C.J."/>
            <person name="Southwick A.M."/>
            <person name="Wu H.C."/>
            <person name="Kim C.J."/>
            <person name="Nguyen M."/>
            <person name="Pham P.K."/>
            <person name="Cheuk R.F."/>
            <person name="Karlin-Newmann G."/>
            <person name="Liu S.X."/>
            <person name="Lam B."/>
            <person name="Sakano H."/>
            <person name="Wu T."/>
            <person name="Yu G."/>
            <person name="Miranda M."/>
            <person name="Quach H.L."/>
            <person name="Tripp M."/>
            <person name="Chang C.H."/>
            <person name="Lee J.M."/>
            <person name="Toriumi M.J."/>
            <person name="Chan M.M."/>
            <person name="Tang C.C."/>
            <person name="Onodera C.S."/>
            <person name="Deng J.M."/>
            <person name="Akiyama K."/>
            <person name="Ansari Y."/>
            <person name="Arakawa T."/>
            <person name="Banh J."/>
            <person name="Banno F."/>
            <person name="Bowser L."/>
            <person name="Brooks S.Y."/>
            <person name="Carninci P."/>
            <person name="Chao Q."/>
            <person name="Choy N."/>
            <person name="Enju A."/>
            <person name="Goldsmith A.D."/>
            <person name="Gurjal M."/>
            <person name="Hansen N.F."/>
            <person name="Hayashizaki Y."/>
            <person name="Johnson-Hopson C."/>
            <person name="Hsuan V.W."/>
            <person name="Iida K."/>
            <person name="Karnes M."/>
            <person name="Khan S."/>
            <person name="Koesema E."/>
            <person name="Ishida J."/>
            <person name="Jiang P.X."/>
            <person name="Jones T."/>
            <person name="Kawai J."/>
            <person name="Kamiya A."/>
            <person name="Meyers C."/>
            <person name="Nakajima M."/>
            <person name="Narusaka M."/>
            <person name="Seki M."/>
            <person name="Sakurai T."/>
            <person name="Satou M."/>
            <person name="Tamse R."/>
            <person name="Vaysberg M."/>
            <person name="Wallender E.K."/>
            <person name="Wong C."/>
            <person name="Yamamura Y."/>
            <person name="Yuan S."/>
            <person name="Shinozaki K."/>
            <person name="Davis R.W."/>
            <person name="Theologis A."/>
            <person name="Ecker J.R."/>
        </authorList>
    </citation>
    <scope>NUCLEOTIDE SEQUENCE [LARGE SCALE MRNA]</scope>
    <source>
        <strain>cv. Columbia</strain>
    </source>
</reference>
<reference key="5">
    <citation type="submission" date="2002-03" db="EMBL/GenBank/DDBJ databases">
        <title>Full-length cDNA from Arabidopsis thaliana.</title>
        <authorList>
            <person name="Brover V.V."/>
            <person name="Troukhan M.E."/>
            <person name="Alexandrov N.A."/>
            <person name="Lu Y.-P."/>
            <person name="Flavell R.B."/>
            <person name="Feldmann K.A."/>
        </authorList>
    </citation>
    <scope>NUCLEOTIDE SEQUENCE [LARGE SCALE MRNA]</scope>
</reference>
<reference key="6">
    <citation type="journal article" date="1993" name="Plant J.">
        <title>Differential expression of two related amino acid transporters with differing substrate specificity in Arabidopsis thaliana.</title>
        <authorList>
            <person name="Kwart M."/>
            <person name="Hirner B."/>
            <person name="Hummel S."/>
            <person name="Frommer W.B."/>
        </authorList>
    </citation>
    <scope>FUNCTION</scope>
    <scope>BIOPHYSICOCHEMICAL PROPERTIES</scope>
    <scope>TISSUE SPECIFICITY</scope>
</reference>
<reference key="7">
    <citation type="journal article" date="1995" name="J. Biol. Chem.">
        <title>Substrate specificity and expression profile of amino acid transporters (AAPs) in Arabidopsis.</title>
        <authorList>
            <person name="Fischer W.-N."/>
            <person name="Kwart M."/>
            <person name="Hummel S."/>
            <person name="Frommer W.B."/>
        </authorList>
    </citation>
    <scope>FUNCTION</scope>
    <scope>TISSUE SPECIFICITY</scope>
</reference>
<reference key="8">
    <citation type="journal article" date="1998" name="Plant J.">
        <title>Developmental control of H+/amino acid permease gene expression during seed development of Arabidopsis.</title>
        <authorList>
            <person name="Hirner B."/>
            <person name="Fischer W.-N."/>
            <person name="Rentsch D."/>
            <person name="Kwart M."/>
            <person name="Frommer W.B."/>
        </authorList>
    </citation>
    <scope>DEVELOPMENTAL STAGE</scope>
    <scope>TISSUE SPECIFICITY</scope>
</reference>
<reference key="9">
    <citation type="journal article" date="2002" name="Plant J.">
        <title>Low and high affinity amino acid H+-cotransporters for cellular import of neutral and charged amino acids.</title>
        <authorList>
            <person name="Fischer W.-N."/>
            <person name="Loo D.D.F."/>
            <person name="Koch W."/>
            <person name="Ludewig U."/>
            <person name="Boorer K.J."/>
            <person name="Tegeder M."/>
            <person name="Rentsch D."/>
            <person name="Wright E.M."/>
            <person name="Frommer W.B."/>
        </authorList>
    </citation>
    <scope>CHARACTERIZATION</scope>
</reference>
<feature type="chain" id="PRO_0000387500" description="Amino acid permease 2">
    <location>
        <begin position="1"/>
        <end position="493"/>
    </location>
</feature>
<feature type="topological domain" description="Cytoplasmic" evidence="5">
    <location>
        <begin position="1"/>
        <end position="49"/>
    </location>
</feature>
<feature type="transmembrane region" description="Helical" evidence="1">
    <location>
        <begin position="50"/>
        <end position="70"/>
    </location>
</feature>
<feature type="transmembrane region" description="Helical" evidence="1">
    <location>
        <begin position="71"/>
        <end position="91"/>
    </location>
</feature>
<feature type="topological domain" description="Cytoplasmic" evidence="5">
    <location>
        <begin position="92"/>
        <end position="138"/>
    </location>
</feature>
<feature type="transmembrane region" description="Helical" evidence="1">
    <location>
        <begin position="139"/>
        <end position="159"/>
    </location>
</feature>
<feature type="topological domain" description="Extracellular" evidence="5">
    <location>
        <begin position="160"/>
        <end position="175"/>
    </location>
</feature>
<feature type="transmembrane region" description="Helical" evidence="1">
    <location>
        <begin position="176"/>
        <end position="196"/>
    </location>
</feature>
<feature type="topological domain" description="Cytoplasmic" evidence="5">
    <location>
        <begin position="197"/>
        <end position="200"/>
    </location>
</feature>
<feature type="transmembrane region" description="Helical" evidence="1">
    <location>
        <begin position="201"/>
        <end position="221"/>
    </location>
</feature>
<feature type="topological domain" description="Extracellular" evidence="5">
    <location>
        <begin position="222"/>
        <end position="253"/>
    </location>
</feature>
<feature type="transmembrane region" description="Helical" evidence="1">
    <location>
        <begin position="254"/>
        <end position="274"/>
    </location>
</feature>
<feature type="topological domain" description="Cytoplasmic" evidence="5">
    <location>
        <begin position="275"/>
        <end position="293"/>
    </location>
</feature>
<feature type="transmembrane region" description="Helical" evidence="1">
    <location>
        <begin position="294"/>
        <end position="314"/>
    </location>
</feature>
<feature type="topological domain" description="Extracellular" evidence="5">
    <location>
        <begin position="315"/>
        <end position="340"/>
    </location>
</feature>
<feature type="transmembrane region" description="Helical" evidence="1">
    <location>
        <begin position="341"/>
        <end position="361"/>
    </location>
</feature>
<feature type="topological domain" description="Cytoplasmic" evidence="5">
    <location>
        <begin position="362"/>
        <end position="396"/>
    </location>
</feature>
<feature type="transmembrane region" description="Helical" evidence="1">
    <location>
        <begin position="397"/>
        <end position="417"/>
    </location>
</feature>
<feature type="topological domain" description="Extracellular" evidence="5">
    <location>
        <begin position="418"/>
        <end position="419"/>
    </location>
</feature>
<feature type="transmembrane region" description="Helical" evidence="1">
    <location>
        <begin position="420"/>
        <end position="440"/>
    </location>
</feature>
<feature type="topological domain" description="Cytoplasmic" evidence="5">
    <location>
        <begin position="441"/>
        <end position="458"/>
    </location>
</feature>
<feature type="transmembrane region" description="Helical" evidence="1">
    <location>
        <begin position="459"/>
        <end position="479"/>
    </location>
</feature>
<feature type="topological domain" description="Extracellular" evidence="5">
    <location>
        <begin position="480"/>
        <end position="493"/>
    </location>
</feature>
<feature type="sequence conflict" description="In Ref. 5; AAM61227." evidence="5" ref="5">
    <original>G</original>
    <variation>V</variation>
    <location>
        <position position="143"/>
    </location>
</feature>
<feature type="sequence conflict" description="In Ref. 5; AAM61227." evidence="5" ref="5">
    <original>S</original>
    <variation>T</variation>
    <location>
        <position position="461"/>
    </location>
</feature>
<dbReference type="EMBL" id="X71787">
    <property type="protein sequence ID" value="CAA50672.1"/>
    <property type="molecule type" value="mRNA"/>
</dbReference>
<dbReference type="EMBL" id="AL391712">
    <property type="protein sequence ID" value="CAC05448.1"/>
    <property type="molecule type" value="Genomic_DNA"/>
</dbReference>
<dbReference type="EMBL" id="CP002688">
    <property type="protein sequence ID" value="AED91352.1"/>
    <property type="molecule type" value="Genomic_DNA"/>
</dbReference>
<dbReference type="EMBL" id="AY090341">
    <property type="protein sequence ID" value="AAL91247.1"/>
    <property type="molecule type" value="mRNA"/>
</dbReference>
<dbReference type="EMBL" id="AY084665">
    <property type="protein sequence ID" value="AAM61227.1"/>
    <property type="molecule type" value="mRNA"/>
</dbReference>
<dbReference type="PIR" id="S52421">
    <property type="entry name" value="S52421"/>
</dbReference>
<dbReference type="RefSeq" id="NP_196484.1">
    <property type="nucleotide sequence ID" value="NM_120958.3"/>
</dbReference>
<dbReference type="FunCoup" id="Q38967">
    <property type="interactions" value="2"/>
</dbReference>
<dbReference type="STRING" id="3702.Q38967"/>
<dbReference type="TCDB" id="2.A.18.2.7">
    <property type="family name" value="the amino acid/auxin permease (aaap) family"/>
</dbReference>
<dbReference type="iPTMnet" id="Q38967"/>
<dbReference type="PaxDb" id="3702-AT5G09220.1"/>
<dbReference type="ProteomicsDB" id="244390"/>
<dbReference type="EnsemblPlants" id="AT5G09220.1">
    <property type="protein sequence ID" value="AT5G09220.1"/>
    <property type="gene ID" value="AT5G09220"/>
</dbReference>
<dbReference type="GeneID" id="830781"/>
<dbReference type="Gramene" id="AT5G09220.1">
    <property type="protein sequence ID" value="AT5G09220.1"/>
    <property type="gene ID" value="AT5G09220"/>
</dbReference>
<dbReference type="KEGG" id="ath:AT5G09220"/>
<dbReference type="Araport" id="AT5G09220"/>
<dbReference type="TAIR" id="AT5G09220">
    <property type="gene designation" value="AAP2"/>
</dbReference>
<dbReference type="eggNOG" id="KOG1303">
    <property type="taxonomic scope" value="Eukaryota"/>
</dbReference>
<dbReference type="HOGENOM" id="CLU_031247_4_1_1"/>
<dbReference type="InParanoid" id="Q38967"/>
<dbReference type="OMA" id="TQAQKIW"/>
<dbReference type="OrthoDB" id="40134at2759"/>
<dbReference type="PhylomeDB" id="Q38967"/>
<dbReference type="SABIO-RK" id="Q38967"/>
<dbReference type="PRO" id="PR:Q38967"/>
<dbReference type="Proteomes" id="UP000006548">
    <property type="component" value="Chromosome 5"/>
</dbReference>
<dbReference type="ExpressionAtlas" id="Q38967">
    <property type="expression patterns" value="baseline and differential"/>
</dbReference>
<dbReference type="GO" id="GO:0005886">
    <property type="term" value="C:plasma membrane"/>
    <property type="evidence" value="ECO:0000314"/>
    <property type="project" value="TAIR"/>
</dbReference>
<dbReference type="GO" id="GO:0015293">
    <property type="term" value="F:symporter activity"/>
    <property type="evidence" value="ECO:0007669"/>
    <property type="project" value="UniProtKB-KW"/>
</dbReference>
<dbReference type="GO" id="GO:0015800">
    <property type="term" value="P:acidic amino acid transport"/>
    <property type="evidence" value="ECO:0000314"/>
    <property type="project" value="TAIR"/>
</dbReference>
<dbReference type="GO" id="GO:0006865">
    <property type="term" value="P:amino acid transport"/>
    <property type="evidence" value="ECO:0000315"/>
    <property type="project" value="TAIR"/>
</dbReference>
<dbReference type="GO" id="GO:0015804">
    <property type="term" value="P:neutral amino acid transport"/>
    <property type="evidence" value="ECO:0000314"/>
    <property type="project" value="TAIR"/>
</dbReference>
<dbReference type="GO" id="GO:0110126">
    <property type="term" value="P:phloem loading"/>
    <property type="evidence" value="ECO:0000315"/>
    <property type="project" value="TAIR"/>
</dbReference>
<dbReference type="FunFam" id="1.20.1740.10:FF:000055">
    <property type="entry name" value="Amino acid permease 6"/>
    <property type="match status" value="1"/>
</dbReference>
<dbReference type="InterPro" id="IPR013057">
    <property type="entry name" value="AA_transpt_TM"/>
</dbReference>
<dbReference type="PANTHER" id="PTHR48017">
    <property type="entry name" value="OS05G0424000 PROTEIN-RELATED"/>
    <property type="match status" value="1"/>
</dbReference>
<dbReference type="Pfam" id="PF01490">
    <property type="entry name" value="Aa_trans"/>
    <property type="match status" value="1"/>
</dbReference>
<sequence>MGETAAANNHRHHHHHGHQVFDVASHDFVPPQPAFKCFDDDGRLKRTGTVWTASAHIITAVIGSGVLSLAWAIAQLGWIAGPAVMLLFSLVTLYSSTLLSDCYRTGDAVSGKRNYTYMDAVRSILGGFKFKICGLIQYLNLFGIAIGYTIAASISMMAIKRSNCFHKSGGKDPCHMSSNPYMIVFGVAEILLSQVPDFDQIWWISIVAAVMSFTYSAIGLALGIVQVAANGVFKGSLTGISIGTVTQTQKIWRTFQALGDIAFAYSYSVVLIEIQDTVRSPPAESKTMKKATKISIAVTTIFYMLCGSMGYAAFGDAAPGNLLTGFGFYNPFWLLDIANAAIVVHLVGAYQVFAQPIFAFIEKSVAERYPDNDFLSKEFEIRIPGFKSPYKVNVFRMVYRSGFVVTTTVISMLMPFFNDVVGILGALGFWPLTVYFPVEMYIKQRKVEKWSTRWVCLQMLSVACLVISVVAGVGSIAGVMLDLKVYKPFKSTY</sequence>
<keyword id="KW-0029">Amino-acid transport</keyword>
<keyword id="KW-1003">Cell membrane</keyword>
<keyword id="KW-0472">Membrane</keyword>
<keyword id="KW-1185">Reference proteome</keyword>
<keyword id="KW-0769">Symport</keyword>
<keyword id="KW-0812">Transmembrane</keyword>
<keyword id="KW-1133">Transmembrane helix</keyword>
<keyword id="KW-0813">Transport</keyword>
<name>AAP2_ARATH</name>
<comment type="function">
    <text evidence="2 3">Amino acid-proton symporter. Stereospecific transporter with a broad specificity for histidine, arginine, glutamate and neutral amino acids, favoring small amino acids such as alanine, asparagine and glutamine. Also accepts large aromatic residues such as phenlalanine or tyrosine. Has a much higher affinity for basic amino acids as compared with AAP1. May function in xylem-to-phloem transfer and in uptake of amino acids assimilated in the green silique tissue.</text>
</comment>
<comment type="activity regulation">
    <text>Inhibited by diethylpyrocarbonate (DEPC).</text>
</comment>
<comment type="biophysicochemical properties">
    <kinetics>
        <KM evidence="3">140 uM for L-proline</KM>
    </kinetics>
    <phDependence>
        <text evidence="3">Optimum pH is acidic.</text>
    </phDependence>
</comment>
<comment type="subcellular location">
    <subcellularLocation>
        <location evidence="5">Cell membrane</location>
        <topology evidence="5">Multi-pass membrane protein</topology>
    </subcellularLocation>
</comment>
<comment type="tissue specificity">
    <text evidence="2 3 4">Highly expressed in developing pods. Found in the vascular strands of siliques, cotyledons, leaves and roots, in the inner phloem of stems, and in the funiculi. Lower levels of expression in flowers. Not expressed in seeds.</text>
</comment>
<comment type="developmental stage">
    <text evidence="4">Strongly induced at heart stage of embryogenesis.</text>
</comment>
<comment type="similarity">
    <text evidence="5">Belongs to the amino acid/polyamine transporter 2 family. Amino acid/auxin permease (AAAP) (TC 2.A.18.2) subfamily.</text>
</comment>
<accession>Q38967</accession>
<accession>Q8LFS8</accession>
<organism>
    <name type="scientific">Arabidopsis thaliana</name>
    <name type="common">Mouse-ear cress</name>
    <dbReference type="NCBI Taxonomy" id="3702"/>
    <lineage>
        <taxon>Eukaryota</taxon>
        <taxon>Viridiplantae</taxon>
        <taxon>Streptophyta</taxon>
        <taxon>Embryophyta</taxon>
        <taxon>Tracheophyta</taxon>
        <taxon>Spermatophyta</taxon>
        <taxon>Magnoliopsida</taxon>
        <taxon>eudicotyledons</taxon>
        <taxon>Gunneridae</taxon>
        <taxon>Pentapetalae</taxon>
        <taxon>rosids</taxon>
        <taxon>malvids</taxon>
        <taxon>Brassicales</taxon>
        <taxon>Brassicaceae</taxon>
        <taxon>Camelineae</taxon>
        <taxon>Arabidopsis</taxon>
    </lineage>
</organism>
<protein>
    <recommendedName>
        <fullName>Amino acid permease 2</fullName>
    </recommendedName>
    <alternativeName>
        <fullName>Amino acid transporter AAP2</fullName>
    </alternativeName>
</protein>
<proteinExistence type="evidence at protein level"/>
<gene>
    <name type="primary">AAP2</name>
    <name type="ordered locus">At5g09220</name>
    <name type="ORF">T2K12.6</name>
    <name type="ORF">T5E8.20</name>
</gene>
<evidence type="ECO:0000255" key="1"/>
<evidence type="ECO:0000269" key="2">
    <source>
    </source>
</evidence>
<evidence type="ECO:0000269" key="3">
    <source>
    </source>
</evidence>
<evidence type="ECO:0000269" key="4">
    <source>
    </source>
</evidence>
<evidence type="ECO:0000305" key="5"/>